<name>SEPS_METMA</name>
<sequence length="539" mass="60905">MKFDPEKIKKDAKENFDHAWNEGKKMVKTPTLNERYPRTTLRYGKAHPVYDTIQKLREAYMRMGFEEMMNPLIVDEKEVHKQFGSEALAVLDRCFYLAGLPRPNVGISDERIAQITEILGDIGEEGIDKIRKELHAYKKGKIEGDDLVPEISAALEVSDALVADMIDRVFPEFKELIPQASTKTLRSHMTSGWFISLGALLEREEPPFQFFSIDRCFRREQQEDASRLMTYYSASCVIMDEDVTVDHGKAVSEGLLSQFGFEKFLFRPDEKRSKYYVPDTQTEVFAFHPKLVGSNSKYSDGWIEVATFGIYSPTALAEYDIPYPVMNLGLGVERLAMILHDAPDVRSLTYPQIPQYSEWEMSDSGLAKQVFVDRMPETPEGQEIASAVVAQCELHGEEPSPCEFPAWEGEVCGRKVKVSVIEPEENTKLCGPAAFNEVVAYQGDILGIPNNKKWQKAFENHSARAGIRFIEAFAAQAAREIEEAAMSGADEHIVRIRIVKVPSEVNLKIGATAQRYITGKNKKIDIRGPVFTSVKAEFE</sequence>
<feature type="chain" id="PRO_0000363762" description="O-phosphoserine--tRNA(Cys) ligase">
    <location>
        <begin position="1"/>
        <end position="539"/>
    </location>
</feature>
<feature type="binding site" evidence="1">
    <location>
        <begin position="188"/>
        <end position="190"/>
    </location>
    <ligand>
        <name>substrate</name>
    </ligand>
</feature>
<feature type="binding site" evidence="1">
    <location>
        <begin position="233"/>
        <end position="235"/>
    </location>
    <ligand>
        <name>substrate</name>
    </ligand>
</feature>
<feature type="binding site" evidence="1">
    <location>
        <begin position="275"/>
        <end position="276"/>
    </location>
    <ligand>
        <name>substrate</name>
    </ligand>
</feature>
<feature type="binding site" evidence="1">
    <location>
        <position position="327"/>
    </location>
    <ligand>
        <name>substrate</name>
    </ligand>
</feature>
<evidence type="ECO:0000255" key="1">
    <source>
        <dbReference type="HAMAP-Rule" id="MF_01674"/>
    </source>
</evidence>
<accession>Q8PX39</accession>
<dbReference type="EC" id="6.1.1.27" evidence="1"/>
<dbReference type="EMBL" id="AE008384">
    <property type="protein sequence ID" value="AAM31079.1"/>
    <property type="molecule type" value="Genomic_DNA"/>
</dbReference>
<dbReference type="RefSeq" id="WP_011033329.1">
    <property type="nucleotide sequence ID" value="NC_003901.1"/>
</dbReference>
<dbReference type="SMR" id="Q8PX39"/>
<dbReference type="GeneID" id="1479725"/>
<dbReference type="KEGG" id="mma:MM_1383"/>
<dbReference type="PATRIC" id="fig|192952.21.peg.1601"/>
<dbReference type="eggNOG" id="arCOG00411">
    <property type="taxonomic scope" value="Archaea"/>
</dbReference>
<dbReference type="HOGENOM" id="CLU_506822_0_0_2"/>
<dbReference type="Proteomes" id="UP000000595">
    <property type="component" value="Chromosome"/>
</dbReference>
<dbReference type="GO" id="GO:0005524">
    <property type="term" value="F:ATP binding"/>
    <property type="evidence" value="ECO:0007669"/>
    <property type="project" value="UniProtKB-UniRule"/>
</dbReference>
<dbReference type="GO" id="GO:0043816">
    <property type="term" value="F:phosphoserine-tRNA(Cys) ligase activity"/>
    <property type="evidence" value="ECO:0007669"/>
    <property type="project" value="UniProtKB-EC"/>
</dbReference>
<dbReference type="GO" id="GO:0000049">
    <property type="term" value="F:tRNA binding"/>
    <property type="evidence" value="ECO:0007669"/>
    <property type="project" value="InterPro"/>
</dbReference>
<dbReference type="GO" id="GO:0006412">
    <property type="term" value="P:translation"/>
    <property type="evidence" value="ECO:0007669"/>
    <property type="project" value="UniProtKB-KW"/>
</dbReference>
<dbReference type="GO" id="GO:0043039">
    <property type="term" value="P:tRNA aminoacylation"/>
    <property type="evidence" value="ECO:0007669"/>
    <property type="project" value="UniProtKB-UniRule"/>
</dbReference>
<dbReference type="FunFam" id="3.30.930.10:FF:000139">
    <property type="entry name" value="O-phosphoserine--tRNA(Cys) ligase"/>
    <property type="match status" value="1"/>
</dbReference>
<dbReference type="Gene3D" id="3.30.930.10">
    <property type="entry name" value="Bira Bifunctional Protein, Domain 2"/>
    <property type="match status" value="1"/>
</dbReference>
<dbReference type="HAMAP" id="MF_01674">
    <property type="entry name" value="Sep_tRNA_synth"/>
    <property type="match status" value="1"/>
</dbReference>
<dbReference type="InterPro" id="IPR006195">
    <property type="entry name" value="aa-tRNA-synth_II"/>
</dbReference>
<dbReference type="InterPro" id="IPR045864">
    <property type="entry name" value="aa-tRNA-synth_II/BPL/LPL"/>
</dbReference>
<dbReference type="InterPro" id="IPR005246">
    <property type="entry name" value="O-Pseryl-tRNA(Cys)_ligase"/>
</dbReference>
<dbReference type="InterPro" id="IPR002319">
    <property type="entry name" value="Phenylalanyl-tRNA_Synthase"/>
</dbReference>
<dbReference type="InterPro" id="IPR041590">
    <property type="entry name" value="SepRS_C"/>
</dbReference>
<dbReference type="NCBIfam" id="TIGR00470">
    <property type="entry name" value="sepS"/>
    <property type="match status" value="1"/>
</dbReference>
<dbReference type="Pfam" id="PF18006">
    <property type="entry name" value="SepRS_C"/>
    <property type="match status" value="1"/>
</dbReference>
<dbReference type="Pfam" id="PF01409">
    <property type="entry name" value="tRNA-synt_2d"/>
    <property type="match status" value="1"/>
</dbReference>
<dbReference type="SUPFAM" id="SSF55681">
    <property type="entry name" value="Class II aaRS and biotin synthetases"/>
    <property type="match status" value="1"/>
</dbReference>
<dbReference type="PROSITE" id="PS50862">
    <property type="entry name" value="AA_TRNA_LIGASE_II"/>
    <property type="match status" value="1"/>
</dbReference>
<protein>
    <recommendedName>
        <fullName evidence="1">O-phosphoserine--tRNA(Cys) ligase</fullName>
        <shortName evidence="1">O-phosphoserine--tRNA ligase</shortName>
        <ecNumber evidence="1">6.1.1.27</ecNumber>
    </recommendedName>
    <alternativeName>
        <fullName evidence="1">Non-canonical O-phosphoseryl-tRNA(Cys) synthetase</fullName>
    </alternativeName>
    <alternativeName>
        <fullName evidence="1">O-phosphoseryl-tRNA(Cys) synthetase</fullName>
        <shortName evidence="1">SepRS</shortName>
    </alternativeName>
</protein>
<organism>
    <name type="scientific">Methanosarcina mazei (strain ATCC BAA-159 / DSM 3647 / Goe1 / Go1 / JCM 11833 / OCM 88)</name>
    <name type="common">Methanosarcina frisia</name>
    <dbReference type="NCBI Taxonomy" id="192952"/>
    <lineage>
        <taxon>Archaea</taxon>
        <taxon>Methanobacteriati</taxon>
        <taxon>Methanobacteriota</taxon>
        <taxon>Stenosarchaea group</taxon>
        <taxon>Methanomicrobia</taxon>
        <taxon>Methanosarcinales</taxon>
        <taxon>Methanosarcinaceae</taxon>
        <taxon>Methanosarcina</taxon>
    </lineage>
</organism>
<gene>
    <name evidence="1" type="primary">sepS</name>
    <name type="ordered locus">MM_1383</name>
</gene>
<keyword id="KW-0030">Aminoacyl-tRNA synthetase</keyword>
<keyword id="KW-0067">ATP-binding</keyword>
<keyword id="KW-0436">Ligase</keyword>
<keyword id="KW-0547">Nucleotide-binding</keyword>
<keyword id="KW-0648">Protein biosynthesis</keyword>
<reference key="1">
    <citation type="journal article" date="2002" name="J. Mol. Microbiol. Biotechnol.">
        <title>The genome of Methanosarcina mazei: evidence for lateral gene transfer between Bacteria and Archaea.</title>
        <authorList>
            <person name="Deppenmeier U."/>
            <person name="Johann A."/>
            <person name="Hartsch T."/>
            <person name="Merkl R."/>
            <person name="Schmitz R.A."/>
            <person name="Martinez-Arias R."/>
            <person name="Henne A."/>
            <person name="Wiezer A."/>
            <person name="Baeumer S."/>
            <person name="Jacobi C."/>
            <person name="Brueggemann H."/>
            <person name="Lienard T."/>
            <person name="Christmann A."/>
            <person name="Boemecke M."/>
            <person name="Steckel S."/>
            <person name="Bhattacharyya A."/>
            <person name="Lykidis A."/>
            <person name="Overbeek R."/>
            <person name="Klenk H.-P."/>
            <person name="Gunsalus R.P."/>
            <person name="Fritz H.-J."/>
            <person name="Gottschalk G."/>
        </authorList>
    </citation>
    <scope>NUCLEOTIDE SEQUENCE [LARGE SCALE GENOMIC DNA]</scope>
    <source>
        <strain>ATCC BAA-159 / DSM 3647 / Goe1 / Go1 / JCM 11833 / OCM 88</strain>
    </source>
</reference>
<comment type="function">
    <text evidence="1">Catalyzes the attachment of O-phosphoserine (Sep) to tRNA(Cys).</text>
</comment>
<comment type="catalytic activity">
    <reaction evidence="1">
        <text>tRNA(Cys) + O-phospho-L-serine + ATP = O-phospho-L-seryl-tRNA(Cys) + AMP + diphosphate</text>
        <dbReference type="Rhea" id="RHEA:25678"/>
        <dbReference type="Rhea" id="RHEA-COMP:9661"/>
        <dbReference type="Rhea" id="RHEA-COMP:9719"/>
        <dbReference type="ChEBI" id="CHEBI:30616"/>
        <dbReference type="ChEBI" id="CHEBI:33019"/>
        <dbReference type="ChEBI" id="CHEBI:57524"/>
        <dbReference type="ChEBI" id="CHEBI:78442"/>
        <dbReference type="ChEBI" id="CHEBI:78551"/>
        <dbReference type="ChEBI" id="CHEBI:456215"/>
        <dbReference type="EC" id="6.1.1.27"/>
    </reaction>
</comment>
<comment type="subunit">
    <text evidence="1">Homotetramer. Interacts with SepCysS.</text>
</comment>
<comment type="similarity">
    <text evidence="1">Belongs to the class-II aminoacyl-tRNA synthetase family. O-phosphoseryl-tRNA(Cys) synthetase subfamily.</text>
</comment>
<proteinExistence type="inferred from homology"/>